<comment type="function">
    <text>Probably involved in cell proliferation and cell-cell interactions.</text>
</comment>
<comment type="subcellular location">
    <subcellularLocation>
        <location>Membrane</location>
        <topology>Multi-pass membrane protein</topology>
    </subcellularLocation>
</comment>
<comment type="similarity">
    <text evidence="2">Belongs to the PMP-22/EMP/MP20 family.</text>
</comment>
<name>EMP3_MOUSE</name>
<evidence type="ECO:0000255" key="1"/>
<evidence type="ECO:0000305" key="2"/>
<reference key="1">
    <citation type="journal article" date="1997" name="J. Neurosci.">
        <title>HNMP-1: a novel hematopoietic and neural membrane protein differentially regulated in neural development and injury.</title>
        <authorList>
            <person name="Bolin L.M."/>
            <person name="McNeil T."/>
            <person name="Lucian L.A."/>
            <person name="Devaux B."/>
            <person name="Franz-Bacon K."/>
            <person name="Gorman D.M."/>
            <person name="Zurawski S."/>
            <person name="Murray R."/>
            <person name="McClanahan T.K."/>
        </authorList>
    </citation>
    <scope>NUCLEOTIDE SEQUENCE [MRNA]</scope>
</reference>
<reference key="2">
    <citation type="journal article" date="1998" name="Genomics">
        <title>Chromosomal mapping of Tmp (Emp1), Xmp (Emp2), and Ymp (Emp3), genes encoding membrane proteins related to Pmp22.</title>
        <authorList>
            <person name="Ben-Porath I."/>
            <person name="Kozak C.A."/>
            <person name="Benvenisty N."/>
        </authorList>
    </citation>
    <scope>NUCLEOTIDE SEQUENCE [MRNA]</scope>
</reference>
<reference key="3">
    <citation type="journal article" date="2005" name="Science">
        <title>The transcriptional landscape of the mammalian genome.</title>
        <authorList>
            <person name="Carninci P."/>
            <person name="Kasukawa T."/>
            <person name="Katayama S."/>
            <person name="Gough J."/>
            <person name="Frith M.C."/>
            <person name="Maeda N."/>
            <person name="Oyama R."/>
            <person name="Ravasi T."/>
            <person name="Lenhard B."/>
            <person name="Wells C."/>
            <person name="Kodzius R."/>
            <person name="Shimokawa K."/>
            <person name="Bajic V.B."/>
            <person name="Brenner S.E."/>
            <person name="Batalov S."/>
            <person name="Forrest A.R."/>
            <person name="Zavolan M."/>
            <person name="Davis M.J."/>
            <person name="Wilming L.G."/>
            <person name="Aidinis V."/>
            <person name="Allen J.E."/>
            <person name="Ambesi-Impiombato A."/>
            <person name="Apweiler R."/>
            <person name="Aturaliya R.N."/>
            <person name="Bailey T.L."/>
            <person name="Bansal M."/>
            <person name="Baxter L."/>
            <person name="Beisel K.W."/>
            <person name="Bersano T."/>
            <person name="Bono H."/>
            <person name="Chalk A.M."/>
            <person name="Chiu K.P."/>
            <person name="Choudhary V."/>
            <person name="Christoffels A."/>
            <person name="Clutterbuck D.R."/>
            <person name="Crowe M.L."/>
            <person name="Dalla E."/>
            <person name="Dalrymple B.P."/>
            <person name="de Bono B."/>
            <person name="Della Gatta G."/>
            <person name="di Bernardo D."/>
            <person name="Down T."/>
            <person name="Engstrom P."/>
            <person name="Fagiolini M."/>
            <person name="Faulkner G."/>
            <person name="Fletcher C.F."/>
            <person name="Fukushima T."/>
            <person name="Furuno M."/>
            <person name="Futaki S."/>
            <person name="Gariboldi M."/>
            <person name="Georgii-Hemming P."/>
            <person name="Gingeras T.R."/>
            <person name="Gojobori T."/>
            <person name="Green R.E."/>
            <person name="Gustincich S."/>
            <person name="Harbers M."/>
            <person name="Hayashi Y."/>
            <person name="Hensch T.K."/>
            <person name="Hirokawa N."/>
            <person name="Hill D."/>
            <person name="Huminiecki L."/>
            <person name="Iacono M."/>
            <person name="Ikeo K."/>
            <person name="Iwama A."/>
            <person name="Ishikawa T."/>
            <person name="Jakt M."/>
            <person name="Kanapin A."/>
            <person name="Katoh M."/>
            <person name="Kawasawa Y."/>
            <person name="Kelso J."/>
            <person name="Kitamura H."/>
            <person name="Kitano H."/>
            <person name="Kollias G."/>
            <person name="Krishnan S.P."/>
            <person name="Kruger A."/>
            <person name="Kummerfeld S.K."/>
            <person name="Kurochkin I.V."/>
            <person name="Lareau L.F."/>
            <person name="Lazarevic D."/>
            <person name="Lipovich L."/>
            <person name="Liu J."/>
            <person name="Liuni S."/>
            <person name="McWilliam S."/>
            <person name="Madan Babu M."/>
            <person name="Madera M."/>
            <person name="Marchionni L."/>
            <person name="Matsuda H."/>
            <person name="Matsuzawa S."/>
            <person name="Miki H."/>
            <person name="Mignone F."/>
            <person name="Miyake S."/>
            <person name="Morris K."/>
            <person name="Mottagui-Tabar S."/>
            <person name="Mulder N."/>
            <person name="Nakano N."/>
            <person name="Nakauchi H."/>
            <person name="Ng P."/>
            <person name="Nilsson R."/>
            <person name="Nishiguchi S."/>
            <person name="Nishikawa S."/>
            <person name="Nori F."/>
            <person name="Ohara O."/>
            <person name="Okazaki Y."/>
            <person name="Orlando V."/>
            <person name="Pang K.C."/>
            <person name="Pavan W.J."/>
            <person name="Pavesi G."/>
            <person name="Pesole G."/>
            <person name="Petrovsky N."/>
            <person name="Piazza S."/>
            <person name="Reed J."/>
            <person name="Reid J.F."/>
            <person name="Ring B.Z."/>
            <person name="Ringwald M."/>
            <person name="Rost B."/>
            <person name="Ruan Y."/>
            <person name="Salzberg S.L."/>
            <person name="Sandelin A."/>
            <person name="Schneider C."/>
            <person name="Schoenbach C."/>
            <person name="Sekiguchi K."/>
            <person name="Semple C.A."/>
            <person name="Seno S."/>
            <person name="Sessa L."/>
            <person name="Sheng Y."/>
            <person name="Shibata Y."/>
            <person name="Shimada H."/>
            <person name="Shimada K."/>
            <person name="Silva D."/>
            <person name="Sinclair B."/>
            <person name="Sperling S."/>
            <person name="Stupka E."/>
            <person name="Sugiura K."/>
            <person name="Sultana R."/>
            <person name="Takenaka Y."/>
            <person name="Taki K."/>
            <person name="Tammoja K."/>
            <person name="Tan S.L."/>
            <person name="Tang S."/>
            <person name="Taylor M.S."/>
            <person name="Tegner J."/>
            <person name="Teichmann S.A."/>
            <person name="Ueda H.R."/>
            <person name="van Nimwegen E."/>
            <person name="Verardo R."/>
            <person name="Wei C.L."/>
            <person name="Yagi K."/>
            <person name="Yamanishi H."/>
            <person name="Zabarovsky E."/>
            <person name="Zhu S."/>
            <person name="Zimmer A."/>
            <person name="Hide W."/>
            <person name="Bult C."/>
            <person name="Grimmond S.M."/>
            <person name="Teasdale R.D."/>
            <person name="Liu E.T."/>
            <person name="Brusic V."/>
            <person name="Quackenbush J."/>
            <person name="Wahlestedt C."/>
            <person name="Mattick J.S."/>
            <person name="Hume D.A."/>
            <person name="Kai C."/>
            <person name="Sasaki D."/>
            <person name="Tomaru Y."/>
            <person name="Fukuda S."/>
            <person name="Kanamori-Katayama M."/>
            <person name="Suzuki M."/>
            <person name="Aoki J."/>
            <person name="Arakawa T."/>
            <person name="Iida J."/>
            <person name="Imamura K."/>
            <person name="Itoh M."/>
            <person name="Kato T."/>
            <person name="Kawaji H."/>
            <person name="Kawagashira N."/>
            <person name="Kawashima T."/>
            <person name="Kojima M."/>
            <person name="Kondo S."/>
            <person name="Konno H."/>
            <person name="Nakano K."/>
            <person name="Ninomiya N."/>
            <person name="Nishio T."/>
            <person name="Okada M."/>
            <person name="Plessy C."/>
            <person name="Shibata K."/>
            <person name="Shiraki T."/>
            <person name="Suzuki S."/>
            <person name="Tagami M."/>
            <person name="Waki K."/>
            <person name="Watahiki A."/>
            <person name="Okamura-Oho Y."/>
            <person name="Suzuki H."/>
            <person name="Kawai J."/>
            <person name="Hayashizaki Y."/>
        </authorList>
    </citation>
    <scope>NUCLEOTIDE SEQUENCE [LARGE SCALE MRNA]</scope>
    <source>
        <strain>C57BL/6J</strain>
        <tissue>Kidney</tissue>
    </source>
</reference>
<reference key="4">
    <citation type="journal article" date="2009" name="PLoS Biol.">
        <title>Lineage-specific biology revealed by a finished genome assembly of the mouse.</title>
        <authorList>
            <person name="Church D.M."/>
            <person name="Goodstadt L."/>
            <person name="Hillier L.W."/>
            <person name="Zody M.C."/>
            <person name="Goldstein S."/>
            <person name="She X."/>
            <person name="Bult C.J."/>
            <person name="Agarwala R."/>
            <person name="Cherry J.L."/>
            <person name="DiCuccio M."/>
            <person name="Hlavina W."/>
            <person name="Kapustin Y."/>
            <person name="Meric P."/>
            <person name="Maglott D."/>
            <person name="Birtle Z."/>
            <person name="Marques A.C."/>
            <person name="Graves T."/>
            <person name="Zhou S."/>
            <person name="Teague B."/>
            <person name="Potamousis K."/>
            <person name="Churas C."/>
            <person name="Place M."/>
            <person name="Herschleb J."/>
            <person name="Runnheim R."/>
            <person name="Forrest D."/>
            <person name="Amos-Landgraf J."/>
            <person name="Schwartz D.C."/>
            <person name="Cheng Z."/>
            <person name="Lindblad-Toh K."/>
            <person name="Eichler E.E."/>
            <person name="Ponting C.P."/>
        </authorList>
    </citation>
    <scope>NUCLEOTIDE SEQUENCE [LARGE SCALE GENOMIC DNA]</scope>
    <source>
        <strain>C57BL/6J</strain>
    </source>
</reference>
<reference key="5">
    <citation type="journal article" date="2004" name="Genome Res.">
        <title>The status, quality, and expansion of the NIH full-length cDNA project: the Mammalian Gene Collection (MGC).</title>
        <authorList>
            <consortium name="The MGC Project Team"/>
        </authorList>
    </citation>
    <scope>NUCLEOTIDE SEQUENCE [LARGE SCALE MRNA]</scope>
    <source>
        <strain>C57BL/6J</strain>
        <tissue>Mammary gland</tissue>
    </source>
</reference>
<accession>O35912</accession>
<accession>O88333</accession>
<accession>Q3UIF8</accession>
<organism>
    <name type="scientific">Mus musculus</name>
    <name type="common">Mouse</name>
    <dbReference type="NCBI Taxonomy" id="10090"/>
    <lineage>
        <taxon>Eukaryota</taxon>
        <taxon>Metazoa</taxon>
        <taxon>Chordata</taxon>
        <taxon>Craniata</taxon>
        <taxon>Vertebrata</taxon>
        <taxon>Euteleostomi</taxon>
        <taxon>Mammalia</taxon>
        <taxon>Eutheria</taxon>
        <taxon>Euarchontoglires</taxon>
        <taxon>Glires</taxon>
        <taxon>Rodentia</taxon>
        <taxon>Myomorpha</taxon>
        <taxon>Muroidea</taxon>
        <taxon>Muridae</taxon>
        <taxon>Murinae</taxon>
        <taxon>Mus</taxon>
        <taxon>Mus</taxon>
    </lineage>
</organism>
<sequence length="163" mass="18253">MSLLLLVVSALHILILVLLFVATLDKSWWTLPDKESLNLWYDCTWNTTTQTWACSNVSENGWLKAVQALMVLSLILCCLSFILFMFQLYTMRRGGLFYATGLCQLCTSAAVFSGALIYAIHTEEILAKHPSGGSFGYCFALAWVAFPLALVSGTVYIHLRKRE</sequence>
<gene>
    <name type="primary">Emp3</name>
    <name type="synonym">Ymp</name>
</gene>
<dbReference type="EMBL" id="U87948">
    <property type="protein sequence ID" value="AAC53324.1"/>
    <property type="molecule type" value="mRNA"/>
</dbReference>
<dbReference type="EMBL" id="AF011750">
    <property type="protein sequence ID" value="AAC33407.1"/>
    <property type="molecule type" value="mRNA"/>
</dbReference>
<dbReference type="EMBL" id="AK146939">
    <property type="protein sequence ID" value="BAE27548.1"/>
    <property type="molecule type" value="mRNA"/>
</dbReference>
<dbReference type="EMBL" id="AC149053">
    <property type="status" value="NOT_ANNOTATED_CDS"/>
    <property type="molecule type" value="Genomic_DNA"/>
</dbReference>
<dbReference type="EMBL" id="BC001999">
    <property type="protein sequence ID" value="AAH01999.1"/>
    <property type="molecule type" value="mRNA"/>
</dbReference>
<dbReference type="CCDS" id="CCDS21270.1"/>
<dbReference type="RefSeq" id="NP_001139818.1">
    <property type="nucleotide sequence ID" value="NM_001146346.1"/>
</dbReference>
<dbReference type="RefSeq" id="NP_034259.2">
    <property type="nucleotide sequence ID" value="NM_010129.2"/>
</dbReference>
<dbReference type="SMR" id="O35912"/>
<dbReference type="FunCoup" id="O35912">
    <property type="interactions" value="1096"/>
</dbReference>
<dbReference type="STRING" id="10090.ENSMUSP00000132519"/>
<dbReference type="GlyCosmos" id="O35912">
    <property type="glycosylation" value="2 sites, No reported glycans"/>
</dbReference>
<dbReference type="GlyGen" id="O35912">
    <property type="glycosylation" value="2 sites"/>
</dbReference>
<dbReference type="iPTMnet" id="O35912"/>
<dbReference type="PhosphoSitePlus" id="O35912"/>
<dbReference type="SwissPalm" id="O35912"/>
<dbReference type="PaxDb" id="10090-ENSMUSP00000132519"/>
<dbReference type="ProteomicsDB" id="277862"/>
<dbReference type="TopDownProteomics" id="O35912"/>
<dbReference type="Antibodypedia" id="31695">
    <property type="antibodies" value="228 antibodies from 25 providers"/>
</dbReference>
<dbReference type="DNASU" id="13732"/>
<dbReference type="Ensembl" id="ENSMUST00000038876.13">
    <property type="protein sequence ID" value="ENSMUSP00000037289.6"/>
    <property type="gene ID" value="ENSMUSG00000040212.13"/>
</dbReference>
<dbReference type="Ensembl" id="ENSMUST00000164119.3">
    <property type="protein sequence ID" value="ENSMUSP00000132519.2"/>
    <property type="gene ID" value="ENSMUSG00000040212.13"/>
</dbReference>
<dbReference type="Ensembl" id="ENSMUST00000210297.2">
    <property type="protein sequence ID" value="ENSMUSP00000147800.2"/>
    <property type="gene ID" value="ENSMUSG00000040212.13"/>
</dbReference>
<dbReference type="GeneID" id="13732"/>
<dbReference type="KEGG" id="mmu:13732"/>
<dbReference type="UCSC" id="uc009gxv.2">
    <property type="organism name" value="mouse"/>
</dbReference>
<dbReference type="AGR" id="MGI:1098729"/>
<dbReference type="CTD" id="2014"/>
<dbReference type="MGI" id="MGI:1098729">
    <property type="gene designation" value="Emp3"/>
</dbReference>
<dbReference type="VEuPathDB" id="HostDB:ENSMUSG00000040212"/>
<dbReference type="eggNOG" id="ENOG502RZP6">
    <property type="taxonomic scope" value="Eukaryota"/>
</dbReference>
<dbReference type="GeneTree" id="ENSGT00950000182696"/>
<dbReference type="HOGENOM" id="CLU_138632_1_0_1"/>
<dbReference type="InParanoid" id="O35912"/>
<dbReference type="OMA" id="CRFDNFT"/>
<dbReference type="OrthoDB" id="8714888at2759"/>
<dbReference type="PhylomeDB" id="O35912"/>
<dbReference type="TreeFam" id="TF330414"/>
<dbReference type="BioGRID-ORCS" id="13732">
    <property type="hits" value="1 hit in 77 CRISPR screens"/>
</dbReference>
<dbReference type="ChiTaRS" id="Emp3">
    <property type="organism name" value="mouse"/>
</dbReference>
<dbReference type="PRO" id="PR:O35912"/>
<dbReference type="Proteomes" id="UP000000589">
    <property type="component" value="Chromosome 7"/>
</dbReference>
<dbReference type="RNAct" id="O35912">
    <property type="molecule type" value="protein"/>
</dbReference>
<dbReference type="Bgee" id="ENSMUSG00000040212">
    <property type="expression patterns" value="Expressed in humerus cartilage element and 236 other cell types or tissues"/>
</dbReference>
<dbReference type="ExpressionAtlas" id="O35912">
    <property type="expression patterns" value="baseline and differential"/>
</dbReference>
<dbReference type="GO" id="GO:0005886">
    <property type="term" value="C:plasma membrane"/>
    <property type="evidence" value="ECO:0007669"/>
    <property type="project" value="Ensembl"/>
</dbReference>
<dbReference type="GO" id="GO:0006915">
    <property type="term" value="P:apoptotic process"/>
    <property type="evidence" value="ECO:0007669"/>
    <property type="project" value="Ensembl"/>
</dbReference>
<dbReference type="GO" id="GO:0032060">
    <property type="term" value="P:bleb assembly"/>
    <property type="evidence" value="ECO:0007669"/>
    <property type="project" value="Ensembl"/>
</dbReference>
<dbReference type="FunFam" id="1.20.140.150:FF:000016">
    <property type="entry name" value="Epithelial membrane protein 3"/>
    <property type="match status" value="1"/>
</dbReference>
<dbReference type="Gene3D" id="1.20.140.150">
    <property type="match status" value="1"/>
</dbReference>
<dbReference type="InterPro" id="IPR003934">
    <property type="entry name" value="EMP_3"/>
</dbReference>
<dbReference type="InterPro" id="IPR050579">
    <property type="entry name" value="PMP-22/EMP/MP20-like"/>
</dbReference>
<dbReference type="InterPro" id="IPR004031">
    <property type="entry name" value="PMP22/EMP/MP20/Claudin"/>
</dbReference>
<dbReference type="InterPro" id="IPR004032">
    <property type="entry name" value="PMP22_EMP_MP20"/>
</dbReference>
<dbReference type="PANTHER" id="PTHR10671:SF8">
    <property type="entry name" value="EPITHELIAL MEMBRANE PROTEIN 3"/>
    <property type="match status" value="1"/>
</dbReference>
<dbReference type="PANTHER" id="PTHR10671">
    <property type="entry name" value="EPITHELIAL MEMBRANE PROTEIN-RELATED"/>
    <property type="match status" value="1"/>
</dbReference>
<dbReference type="Pfam" id="PF00822">
    <property type="entry name" value="PMP22_Claudin"/>
    <property type="match status" value="1"/>
</dbReference>
<dbReference type="PRINTS" id="PR01453">
    <property type="entry name" value="EPMEMFAMILY"/>
</dbReference>
<dbReference type="PRINTS" id="PR01456">
    <property type="entry name" value="EPMEMPROT3"/>
</dbReference>
<dbReference type="PROSITE" id="PS01221">
    <property type="entry name" value="PMP22_1"/>
    <property type="match status" value="1"/>
</dbReference>
<dbReference type="PROSITE" id="PS01222">
    <property type="entry name" value="PMP22_2"/>
    <property type="match status" value="1"/>
</dbReference>
<feature type="chain" id="PRO_0000164661" description="Epithelial membrane protein 3">
    <location>
        <begin position="1"/>
        <end position="163"/>
    </location>
</feature>
<feature type="transmembrane region" description="Helical" evidence="1">
    <location>
        <begin position="4"/>
        <end position="24"/>
    </location>
</feature>
<feature type="transmembrane region" description="Helical" evidence="1">
    <location>
        <begin position="66"/>
        <end position="86"/>
    </location>
</feature>
<feature type="transmembrane region" description="Helical" evidence="1">
    <location>
        <begin position="100"/>
        <end position="120"/>
    </location>
</feature>
<feature type="transmembrane region" description="Helical" evidence="1">
    <location>
        <begin position="139"/>
        <end position="159"/>
    </location>
</feature>
<feature type="glycosylation site" description="N-linked (GlcNAc...) asparagine" evidence="1">
    <location>
        <position position="46"/>
    </location>
</feature>
<feature type="glycosylation site" description="N-linked (GlcNAc...) asparagine" evidence="1">
    <location>
        <position position="56"/>
    </location>
</feature>
<feature type="sequence conflict" description="In Ref. 2; AAC33407." evidence="2" ref="2">
    <original>L</original>
    <variation>I</variation>
    <location>
        <position position="96"/>
    </location>
</feature>
<feature type="sequence conflict" description="In Ref. 2; AAC33407." evidence="2" ref="2">
    <original>C</original>
    <variation>W</variation>
    <location>
        <position position="106"/>
    </location>
</feature>
<feature type="sequence conflict" description="In Ref. 2; AAC33407." evidence="2" ref="2">
    <original>H</original>
    <variation>Q</variation>
    <location>
        <position position="129"/>
    </location>
</feature>
<feature type="sequence conflict" description="In Ref. 2; AAC33407." evidence="2" ref="2">
    <original>TV</original>
    <variation>IMY</variation>
    <location>
        <begin position="154"/>
        <end position="155"/>
    </location>
</feature>
<feature type="sequence conflict" description="In Ref. 1; AAC53324 and 5; AAH01999." evidence="2" ref="1 5">
    <original>T</original>
    <variation>I</variation>
    <location>
        <position position="154"/>
    </location>
</feature>
<keyword id="KW-0325">Glycoprotein</keyword>
<keyword id="KW-0472">Membrane</keyword>
<keyword id="KW-1185">Reference proteome</keyword>
<keyword id="KW-0812">Transmembrane</keyword>
<keyword id="KW-1133">Transmembrane helix</keyword>
<proteinExistence type="evidence at transcript level"/>
<protein>
    <recommendedName>
        <fullName>Epithelial membrane protein 3</fullName>
        <shortName>EMP-3</shortName>
    </recommendedName>
    <alternativeName>
        <fullName>Hematopoietic neural membrane protein 1</fullName>
        <shortName>HNMP-1</shortName>
    </alternativeName>
    <alternativeName>
        <fullName>Protein YMP</fullName>
    </alternativeName>
</protein>